<accession>G4NEB8</accession>
<feature type="chain" id="PRO_0000453095" description="Mitogen-activated protein kinase kinae MST7">
    <location>
        <begin position="1"/>
        <end position="415"/>
    </location>
</feature>
<feature type="domain" description="Protein kinase" evidence="1">
    <location>
        <begin position="61"/>
        <end position="326"/>
    </location>
</feature>
<feature type="region of interest" description="Disordered" evidence="2">
    <location>
        <begin position="1"/>
        <end position="37"/>
    </location>
</feature>
<feature type="region of interest" description="Disordered" evidence="2">
    <location>
        <begin position="363"/>
        <end position="409"/>
    </location>
</feature>
<feature type="binding site" evidence="1">
    <location>
        <begin position="67"/>
        <end position="75"/>
    </location>
    <ligand>
        <name>ATP</name>
        <dbReference type="ChEBI" id="CHEBI:30616"/>
    </ligand>
</feature>
<feature type="binding site" evidence="1">
    <location>
        <position position="90"/>
    </location>
    <ligand>
        <name>ATP</name>
        <dbReference type="ChEBI" id="CHEBI:30616"/>
    </ligand>
</feature>
<feature type="mutagenesis site" description="Does not affect appressorium formation and plant infection." evidence="6">
    <original>C</original>
    <variation>A</variation>
    <location>
        <position position="114"/>
    </location>
</feature>
<feature type="mutagenesis site" description="Does not affect appressorium formation and plant infection." evidence="6">
    <original>C</original>
    <variation>A</variation>
    <location>
        <position position="136"/>
    </location>
</feature>
<feature type="mutagenesis site" description="Does not affect appressorium formation and plant infection." evidence="6">
    <original>C</original>
    <variation>A</variation>
    <location>
        <position position="201"/>
    </location>
</feature>
<feature type="mutagenesis site" description="Leads to constitutive activity; when associated with Glu-216." evidence="3">
    <original>S</original>
    <variation>D</variation>
    <location>
        <position position="212"/>
    </location>
</feature>
<feature type="mutagenesis site" description="Leads to constitutive activity; when associated with Asp-212." evidence="3">
    <original>T</original>
    <variation>E</variation>
    <location>
        <position position="216"/>
    </location>
</feature>
<feature type="mutagenesis site" description="Impairs appressorium formation and pathogenicity." evidence="6">
    <original>C</original>
    <variation>A</variation>
    <location>
        <position position="305"/>
    </location>
</feature>
<dbReference type="EC" id="2.7.11.24" evidence="3"/>
<dbReference type="EMBL" id="CM001235">
    <property type="protein sequence ID" value="EHA48601.1"/>
    <property type="molecule type" value="Genomic_DNA"/>
</dbReference>
<dbReference type="RefSeq" id="XP_003718185.1">
    <property type="nucleotide sequence ID" value="XM_003718137.1"/>
</dbReference>
<dbReference type="SMR" id="G4NEB8"/>
<dbReference type="FunCoup" id="G4NEB8">
    <property type="interactions" value="449"/>
</dbReference>
<dbReference type="STRING" id="242507.G4NEB8"/>
<dbReference type="EnsemblFungi" id="MGG_00800T0">
    <property type="protein sequence ID" value="MGG_00800T0"/>
    <property type="gene ID" value="MGG_00800"/>
</dbReference>
<dbReference type="GeneID" id="2675190"/>
<dbReference type="KEGG" id="mgr:MGG_00800"/>
<dbReference type="VEuPathDB" id="FungiDB:MGG_00800"/>
<dbReference type="eggNOG" id="KOG0581">
    <property type="taxonomic scope" value="Eukaryota"/>
</dbReference>
<dbReference type="HOGENOM" id="CLU_000288_63_23_1"/>
<dbReference type="InParanoid" id="G4NEB8"/>
<dbReference type="OMA" id="MIAKCLM"/>
<dbReference type="OrthoDB" id="10252354at2759"/>
<dbReference type="PHI-base" id="PHI:2120"/>
<dbReference type="PHI-base" id="PHI:417"/>
<dbReference type="Proteomes" id="UP000009058">
    <property type="component" value="Chromosome 5"/>
</dbReference>
<dbReference type="GO" id="GO:0005524">
    <property type="term" value="F:ATP binding"/>
    <property type="evidence" value="ECO:0007669"/>
    <property type="project" value="UniProtKB-KW"/>
</dbReference>
<dbReference type="GO" id="GO:0004707">
    <property type="term" value="F:MAP kinase activity"/>
    <property type="evidence" value="ECO:0007669"/>
    <property type="project" value="UniProtKB-EC"/>
</dbReference>
<dbReference type="GO" id="GO:0004708">
    <property type="term" value="F:MAP kinase kinase activity"/>
    <property type="evidence" value="ECO:0000314"/>
    <property type="project" value="GO_Central"/>
</dbReference>
<dbReference type="GO" id="GO:0000165">
    <property type="term" value="P:MAPK cascade"/>
    <property type="evidence" value="ECO:0000314"/>
    <property type="project" value="GO_Central"/>
</dbReference>
<dbReference type="GO" id="GO:0075018">
    <property type="term" value="P:positive regulation of appressorium formation"/>
    <property type="evidence" value="ECO:0000315"/>
    <property type="project" value="GO_Central"/>
</dbReference>
<dbReference type="CDD" id="cd06620">
    <property type="entry name" value="PKc_Byr1_like"/>
    <property type="match status" value="1"/>
</dbReference>
<dbReference type="FunFam" id="1.10.510.10:FF:000253">
    <property type="entry name" value="MAP kinase kinase Ste7"/>
    <property type="match status" value="1"/>
</dbReference>
<dbReference type="FunFam" id="3.30.200.20:FF:000261">
    <property type="entry name" value="MAP kinase kinase Ste7"/>
    <property type="match status" value="1"/>
</dbReference>
<dbReference type="Gene3D" id="3.30.200.20">
    <property type="entry name" value="Phosphorylase Kinase, domain 1"/>
    <property type="match status" value="1"/>
</dbReference>
<dbReference type="Gene3D" id="1.10.510.10">
    <property type="entry name" value="Transferase(Phosphotransferase) domain 1"/>
    <property type="match status" value="1"/>
</dbReference>
<dbReference type="InterPro" id="IPR049613">
    <property type="entry name" value="Byr1-like_cat"/>
</dbReference>
<dbReference type="InterPro" id="IPR011009">
    <property type="entry name" value="Kinase-like_dom_sf"/>
</dbReference>
<dbReference type="InterPro" id="IPR050915">
    <property type="entry name" value="MAP_kinase_kinase"/>
</dbReference>
<dbReference type="InterPro" id="IPR000719">
    <property type="entry name" value="Prot_kinase_dom"/>
</dbReference>
<dbReference type="InterPro" id="IPR017441">
    <property type="entry name" value="Protein_kinase_ATP_BS"/>
</dbReference>
<dbReference type="InterPro" id="IPR008271">
    <property type="entry name" value="Ser/Thr_kinase_AS"/>
</dbReference>
<dbReference type="PANTHER" id="PTHR47448">
    <property type="entry name" value="DUAL SPECIFICITY MITOGEN-ACTIVATED PROTEIN KINASE KINASE DSOR1-LIKE PROTEIN"/>
    <property type="match status" value="1"/>
</dbReference>
<dbReference type="PANTHER" id="PTHR47448:SF1">
    <property type="entry name" value="SERINE_THREONINE-PROTEIN KINASE STE7 HOMOLOG"/>
    <property type="match status" value="1"/>
</dbReference>
<dbReference type="Pfam" id="PF00069">
    <property type="entry name" value="Pkinase"/>
    <property type="match status" value="1"/>
</dbReference>
<dbReference type="SMART" id="SM00220">
    <property type="entry name" value="S_TKc"/>
    <property type="match status" value="1"/>
</dbReference>
<dbReference type="SUPFAM" id="SSF56112">
    <property type="entry name" value="Protein kinase-like (PK-like)"/>
    <property type="match status" value="1"/>
</dbReference>
<dbReference type="PROSITE" id="PS00107">
    <property type="entry name" value="PROTEIN_KINASE_ATP"/>
    <property type="match status" value="1"/>
</dbReference>
<dbReference type="PROSITE" id="PS50011">
    <property type="entry name" value="PROTEIN_KINASE_DOM"/>
    <property type="match status" value="1"/>
</dbReference>
<dbReference type="PROSITE" id="PS00108">
    <property type="entry name" value="PROTEIN_KINASE_ST"/>
    <property type="match status" value="1"/>
</dbReference>
<sequence>MADPFAPRTMKRRNVKGLALTPAAPKPPPTAENAPIHRDSDQHAQLEIGIEFNLDLRPEDLEVIKDLGSGNGGTVSKVRHIPTNTVMARKVIHVEAKREMRKRIVRELQIMHSCNSEYIVTFYGAFLNENNDVIMCMEYADVGSLDRVSRVFGPIRVDVLGKIAEATLGGLTYLYAKHHIMHRDIKPSNILVNSRGSIKLCDFGVSGELINSIADTFVGTSTYMAPERIQGEKYTVKSDVWSFGLSIMELAIGKFPFAASEQLSDAESAPAGILDLLQQIVHEPAPKLPKSDAFPQILEDMIQKCLYKNPDDRPTPEELFERDPFVQAAKRTPVDLREWAFGLMERDNRKSHLAPQLSPATADLLRSSDSPTATYHGDDRPLETPTSAYRVDPRRGPAEGSAGLADQVDRLYIRD</sequence>
<proteinExistence type="evidence at protein level"/>
<evidence type="ECO:0000255" key="1">
    <source>
        <dbReference type="PROSITE-ProRule" id="PRU00159"/>
    </source>
</evidence>
<evidence type="ECO:0000256" key="2">
    <source>
        <dbReference type="SAM" id="MobiDB-lite"/>
    </source>
</evidence>
<evidence type="ECO:0000269" key="3">
    <source>
    </source>
</evidence>
<evidence type="ECO:0000269" key="4">
    <source>
    </source>
</evidence>
<evidence type="ECO:0000269" key="5">
    <source>
    </source>
</evidence>
<evidence type="ECO:0000269" key="6">
    <source>
    </source>
</evidence>
<evidence type="ECO:0000303" key="7">
    <source>
    </source>
</evidence>
<evidence type="ECO:0000305" key="8"/>
<comment type="function">
    <text evidence="3 4 5 6">Mitogen-activated protein kinase kinase; part of the MST11-MST7-PMK1 MAP kinase (MAPK) cascade that is essential for appressorium formation, penetration and invasive growth (PubMed:15749760, PubMed:21283781, PubMed:23454094, PubMed:27059015). The MST11-MST7-PMK1 MAP kinase cascade transduces signals from the cell surface sensors MDB2 and SHO1 that recognize various surface signals such as surface hydrophobicity, cutin monomers, and rice leaf waxes (PubMed:21283781). MST7 acts as the upstream MAPKK that directly phosphorylates MAP kinase PMK1 (PubMed:15749760).</text>
</comment>
<comment type="catalytic activity">
    <reaction evidence="3">
        <text>L-seryl-[protein] + ATP = O-phospho-L-seryl-[protein] + ADP + H(+)</text>
        <dbReference type="Rhea" id="RHEA:17989"/>
        <dbReference type="Rhea" id="RHEA-COMP:9863"/>
        <dbReference type="Rhea" id="RHEA-COMP:11604"/>
        <dbReference type="ChEBI" id="CHEBI:15378"/>
        <dbReference type="ChEBI" id="CHEBI:29999"/>
        <dbReference type="ChEBI" id="CHEBI:30616"/>
        <dbReference type="ChEBI" id="CHEBI:83421"/>
        <dbReference type="ChEBI" id="CHEBI:456216"/>
        <dbReference type="EC" id="2.7.11.24"/>
    </reaction>
    <physiologicalReaction direction="left-to-right" evidence="3">
        <dbReference type="Rhea" id="RHEA:17990"/>
    </physiologicalReaction>
</comment>
<comment type="catalytic activity">
    <reaction evidence="3">
        <text>L-threonyl-[protein] + ATP = O-phospho-L-threonyl-[protein] + ADP + H(+)</text>
        <dbReference type="Rhea" id="RHEA:46608"/>
        <dbReference type="Rhea" id="RHEA-COMP:11060"/>
        <dbReference type="Rhea" id="RHEA-COMP:11605"/>
        <dbReference type="ChEBI" id="CHEBI:15378"/>
        <dbReference type="ChEBI" id="CHEBI:30013"/>
        <dbReference type="ChEBI" id="CHEBI:30616"/>
        <dbReference type="ChEBI" id="CHEBI:61977"/>
        <dbReference type="ChEBI" id="CHEBI:456216"/>
        <dbReference type="EC" id="2.7.11.24"/>
    </reaction>
    <physiologicalReaction direction="left-to-right" evidence="3">
        <dbReference type="Rhea" id="RHEA:46609"/>
    </physiologicalReaction>
</comment>
<comment type="subunit">
    <text evidence="3 6">Homodimer (PubMed:27059015). Interacts with the adapter protein MST50 (PubMed:15749760). Interacts with TRX2 (PubMed:27059015).</text>
</comment>
<comment type="disruption phenotype">
    <text evidence="3 5">Produces much less aerial hyphae and conidia and shows weakened cell walls and higher sensitivity to cell wall-degrading enzymes (PubMed:15749760). Impairs the formation of appressoria and the ability to infect rice plants (PubMed:15749760, PubMed:23454094).</text>
</comment>
<comment type="similarity">
    <text evidence="8">Belongs to the protein kinase superfamily. STE Ser/Thr protein kinase family. MAP kinase kinase subfamily.</text>
</comment>
<gene>
    <name evidence="7" type="primary">MST7</name>
    <name type="ORF">MGG_00800</name>
</gene>
<organism>
    <name type="scientific">Pyricularia oryzae (strain 70-15 / ATCC MYA-4617 / FGSC 8958)</name>
    <name type="common">Rice blast fungus</name>
    <name type="synonym">Magnaporthe oryzae</name>
    <dbReference type="NCBI Taxonomy" id="242507"/>
    <lineage>
        <taxon>Eukaryota</taxon>
        <taxon>Fungi</taxon>
        <taxon>Dikarya</taxon>
        <taxon>Ascomycota</taxon>
        <taxon>Pezizomycotina</taxon>
        <taxon>Sordariomycetes</taxon>
        <taxon>Sordariomycetidae</taxon>
        <taxon>Magnaporthales</taxon>
        <taxon>Pyriculariaceae</taxon>
        <taxon>Pyricularia</taxon>
    </lineage>
</organism>
<keyword id="KW-0067">ATP-binding</keyword>
<keyword id="KW-0418">Kinase</keyword>
<keyword id="KW-0547">Nucleotide-binding</keyword>
<keyword id="KW-1185">Reference proteome</keyword>
<keyword id="KW-0723">Serine/threonine-protein kinase</keyword>
<keyword id="KW-0808">Transferase</keyword>
<keyword id="KW-0843">Virulence</keyword>
<name>MST7_PYRO7</name>
<reference key="1">
    <citation type="journal article" date="2005" name="Nature">
        <title>The genome sequence of the rice blast fungus Magnaporthe grisea.</title>
        <authorList>
            <person name="Dean R.A."/>
            <person name="Talbot N.J."/>
            <person name="Ebbole D.J."/>
            <person name="Farman M.L."/>
            <person name="Mitchell T.K."/>
            <person name="Orbach M.J."/>
            <person name="Thon M.R."/>
            <person name="Kulkarni R."/>
            <person name="Xu J.-R."/>
            <person name="Pan H."/>
            <person name="Read N.D."/>
            <person name="Lee Y.-H."/>
            <person name="Carbone I."/>
            <person name="Brown D."/>
            <person name="Oh Y.Y."/>
            <person name="Donofrio N."/>
            <person name="Jeong J.S."/>
            <person name="Soanes D.M."/>
            <person name="Djonovic S."/>
            <person name="Kolomiets E."/>
            <person name="Rehmeyer C."/>
            <person name="Li W."/>
            <person name="Harding M."/>
            <person name="Kim S."/>
            <person name="Lebrun M.-H."/>
            <person name="Bohnert H."/>
            <person name="Coughlan S."/>
            <person name="Butler J."/>
            <person name="Calvo S.E."/>
            <person name="Ma L.-J."/>
            <person name="Nicol R."/>
            <person name="Purcell S."/>
            <person name="Nusbaum C."/>
            <person name="Galagan J.E."/>
            <person name="Birren B.W."/>
        </authorList>
    </citation>
    <scope>NUCLEOTIDE SEQUENCE [LARGE SCALE GENOMIC DNA]</scope>
    <source>
        <strain>70-15 / ATCC MYA-4617 / FGSC 8958</strain>
    </source>
</reference>
<reference key="2">
    <citation type="journal article" date="2005" name="Plant Cell">
        <title>A mitogen-activated protein kinase cascade regulating infection-related morphogenesis in Magnaporthe grisea.</title>
        <authorList>
            <person name="Zhao X."/>
            <person name="Kim Y."/>
            <person name="Park G."/>
            <person name="Xu J.R."/>
        </authorList>
    </citation>
    <scope>FUNCTION</scope>
    <scope>CATALYTIC ACTIVITY</scope>
    <scope>DISRUPTION PHENOTYPE</scope>
    <scope>MUTAGENESIS OF SER-212 AND THR-216</scope>
    <scope>INTERACTION WITH MST50</scope>
</reference>
<reference key="3">
    <citation type="journal article" date="2011" name="PLoS Pathog.">
        <title>Multiple plant surface signals are sensed by different mechanisms in the rice blast fungus for appressorium formation.</title>
        <authorList>
            <person name="Liu W."/>
            <person name="Zhou X."/>
            <person name="Li G."/>
            <person name="Li L."/>
            <person name="Kong L."/>
            <person name="Wang C."/>
            <person name="Zhang H."/>
            <person name="Xu J.R."/>
        </authorList>
    </citation>
    <scope>FUNCTION</scope>
</reference>
<reference key="4">
    <citation type="journal article" date="2013" name="Gene Expr. Patterns">
        <title>Complexity of roles and regulation of the PMK1-MAPK pathway in mycelium development, conidiation and appressorium formation in Magnaporthe oryzae.</title>
        <authorList>
            <person name="Jin Q."/>
            <person name="Li C."/>
            <person name="Li Y."/>
            <person name="Shang J."/>
            <person name="Li D."/>
            <person name="Chen B."/>
            <person name="Dong H."/>
        </authorList>
    </citation>
    <scope>FUNCTION</scope>
    <scope>DISRUPTION PHENOTYPE</scope>
</reference>
<reference key="5">
    <citation type="journal article" date="2016" name="Environ. Microbiol.">
        <title>Thioredoxins are involved in the activation of the PMK1 MAP kinase pathway during appressorium penetration and invasive growth in Magnaporthe oryzae.</title>
        <authorList>
            <person name="Zhang S."/>
            <person name="Jiang C."/>
            <person name="Zhang Q."/>
            <person name="Qi L."/>
            <person name="Li C."/>
            <person name="Xu J.R."/>
        </authorList>
    </citation>
    <scope>FUNCTION</scope>
    <scope>INTERACTION WITH TRX2</scope>
    <scope>SUBUNIT</scope>
    <scope>MUTAGENESIS OF CYS-114; CYS-136; CYS-201 AND CYS-305</scope>
</reference>
<protein>
    <recommendedName>
        <fullName evidence="7">Mitogen-activated protein kinase kinae MST7</fullName>
        <shortName evidence="7">MAPKK MST7</shortName>
        <ecNumber evidence="3">2.7.11.24</ecNumber>
    </recommendedName>
    <alternativeName>
        <fullName evidence="7">MEK MST7</fullName>
    </alternativeName>
</protein>